<gene>
    <name evidence="1" type="primary">psaJ</name>
</gene>
<geneLocation type="chloroplast"/>
<organism>
    <name type="scientific">Gossypium barbadense</name>
    <name type="common">Sea Island cotton</name>
    <name type="synonym">Hibiscus barbadensis</name>
    <dbReference type="NCBI Taxonomy" id="3634"/>
    <lineage>
        <taxon>Eukaryota</taxon>
        <taxon>Viridiplantae</taxon>
        <taxon>Streptophyta</taxon>
        <taxon>Embryophyta</taxon>
        <taxon>Tracheophyta</taxon>
        <taxon>Spermatophyta</taxon>
        <taxon>Magnoliopsida</taxon>
        <taxon>eudicotyledons</taxon>
        <taxon>Gunneridae</taxon>
        <taxon>Pentapetalae</taxon>
        <taxon>rosids</taxon>
        <taxon>malvids</taxon>
        <taxon>Malvales</taxon>
        <taxon>Malvaceae</taxon>
        <taxon>Malvoideae</taxon>
        <taxon>Gossypium</taxon>
    </lineage>
</organism>
<protein>
    <recommendedName>
        <fullName evidence="1">Photosystem I reaction center subunit IX</fullName>
    </recommendedName>
    <alternativeName>
        <fullName evidence="1">PSI-J</fullName>
    </alternativeName>
</protein>
<evidence type="ECO:0000255" key="1">
    <source>
        <dbReference type="HAMAP-Rule" id="MF_00522"/>
    </source>
</evidence>
<comment type="function">
    <text evidence="1">May help in the organization of the PsaE and PsaF subunits.</text>
</comment>
<comment type="subcellular location">
    <subcellularLocation>
        <location evidence="1">Plastid</location>
        <location evidence="1">Chloroplast thylakoid membrane</location>
        <topology evidence="1">Single-pass membrane protein</topology>
    </subcellularLocation>
</comment>
<comment type="similarity">
    <text evidence="1">Belongs to the PsaJ family.</text>
</comment>
<keyword id="KW-0150">Chloroplast</keyword>
<keyword id="KW-0472">Membrane</keyword>
<keyword id="KW-0602">Photosynthesis</keyword>
<keyword id="KW-0603">Photosystem I</keyword>
<keyword id="KW-0934">Plastid</keyword>
<keyword id="KW-0793">Thylakoid</keyword>
<keyword id="KW-0812">Transmembrane</keyword>
<keyword id="KW-1133">Transmembrane helix</keyword>
<feature type="chain" id="PRO_0000276058" description="Photosystem I reaction center subunit IX">
    <location>
        <begin position="1"/>
        <end position="55"/>
    </location>
</feature>
<feature type="transmembrane region" description="Helical" evidence="1">
    <location>
        <begin position="7"/>
        <end position="27"/>
    </location>
</feature>
<dbReference type="EMBL" id="AP009123">
    <property type="protein sequence ID" value="BAF41267.1"/>
    <property type="molecule type" value="Genomic_DNA"/>
</dbReference>
<dbReference type="RefSeq" id="YP_913207.1">
    <property type="nucleotide sequence ID" value="NC_008641.1"/>
</dbReference>
<dbReference type="SMR" id="A0ZZ55"/>
<dbReference type="GeneID" id="4575215"/>
<dbReference type="GO" id="GO:0009535">
    <property type="term" value="C:chloroplast thylakoid membrane"/>
    <property type="evidence" value="ECO:0007669"/>
    <property type="project" value="UniProtKB-SubCell"/>
</dbReference>
<dbReference type="GO" id="GO:0009522">
    <property type="term" value="C:photosystem I"/>
    <property type="evidence" value="ECO:0007669"/>
    <property type="project" value="UniProtKB-KW"/>
</dbReference>
<dbReference type="GO" id="GO:0015979">
    <property type="term" value="P:photosynthesis"/>
    <property type="evidence" value="ECO:0007669"/>
    <property type="project" value="UniProtKB-UniRule"/>
</dbReference>
<dbReference type="FunFam" id="1.20.5.510:FF:000001">
    <property type="entry name" value="Photosystem I reaction center subunit IX"/>
    <property type="match status" value="1"/>
</dbReference>
<dbReference type="Gene3D" id="1.20.5.510">
    <property type="entry name" value="Single helix bin"/>
    <property type="match status" value="1"/>
</dbReference>
<dbReference type="HAMAP" id="MF_00522">
    <property type="entry name" value="PSI_PsaJ"/>
    <property type="match status" value="1"/>
</dbReference>
<dbReference type="InterPro" id="IPR002615">
    <property type="entry name" value="PSI_PsaJ"/>
</dbReference>
<dbReference type="InterPro" id="IPR036062">
    <property type="entry name" value="PSI_PsaJ_sf"/>
</dbReference>
<dbReference type="PANTHER" id="PTHR36082">
    <property type="match status" value="1"/>
</dbReference>
<dbReference type="PANTHER" id="PTHR36082:SF2">
    <property type="entry name" value="PHOTOSYSTEM I REACTION CENTER SUBUNIT IX"/>
    <property type="match status" value="1"/>
</dbReference>
<dbReference type="Pfam" id="PF01701">
    <property type="entry name" value="PSI_PsaJ"/>
    <property type="match status" value="1"/>
</dbReference>
<dbReference type="SUPFAM" id="SSF81544">
    <property type="entry name" value="Subunit IX of photosystem I reaction centre, PsaJ"/>
    <property type="match status" value="1"/>
</dbReference>
<proteinExistence type="inferred from homology"/>
<accession>A0ZZ55</accession>
<reference key="1">
    <citation type="journal article" date="2006" name="Genes Genet. Syst.">
        <title>Complete nucleotide sequence of the cotton (Gossypium barbadense L.) chloroplast genome with a comparative analysis of sequences among 9 dicot plants.</title>
        <authorList>
            <person name="Ibrahim R.I.H."/>
            <person name="Azuma J."/>
            <person name="Sakamoto M."/>
        </authorList>
    </citation>
    <scope>NUCLEOTIDE SEQUENCE [LARGE SCALE GENOMIC DNA]</scope>
</reference>
<name>PSAJ_GOSBA</name>
<sequence>MRDLKTYLSVAPVLSTLWFGSLAGLLIEINRFFPDALTFPFFLIRVIVAGRGEKD</sequence>